<evidence type="ECO:0000255" key="1">
    <source>
        <dbReference type="HAMAP-Rule" id="MF_01590"/>
    </source>
</evidence>
<organism>
    <name type="scientific">Campylobacter jejuni subsp. doylei (strain ATCC BAA-1458 / RM4099 / 269.97)</name>
    <dbReference type="NCBI Taxonomy" id="360109"/>
    <lineage>
        <taxon>Bacteria</taxon>
        <taxon>Pseudomonadati</taxon>
        <taxon>Campylobacterota</taxon>
        <taxon>Epsilonproteobacteria</taxon>
        <taxon>Campylobacterales</taxon>
        <taxon>Campylobacteraceae</taxon>
        <taxon>Campylobacter</taxon>
    </lineage>
</organism>
<comment type="function">
    <text evidence="1">Catalyzes carboxymethyl transfer from carboxy-S-adenosyl-L-methionine (Cx-SAM) to 5-hydroxyuridine (ho5U) to form 5-carboxymethoxyuridine (cmo5U) at position 34 in tRNAs.</text>
</comment>
<comment type="catalytic activity">
    <reaction evidence="1">
        <text>carboxy-S-adenosyl-L-methionine + 5-hydroxyuridine(34) in tRNA = 5-carboxymethoxyuridine(34) in tRNA + S-adenosyl-L-homocysteine + H(+)</text>
        <dbReference type="Rhea" id="RHEA:52848"/>
        <dbReference type="Rhea" id="RHEA-COMP:13381"/>
        <dbReference type="Rhea" id="RHEA-COMP:13383"/>
        <dbReference type="ChEBI" id="CHEBI:15378"/>
        <dbReference type="ChEBI" id="CHEBI:57856"/>
        <dbReference type="ChEBI" id="CHEBI:134278"/>
        <dbReference type="ChEBI" id="CHEBI:136877"/>
        <dbReference type="ChEBI" id="CHEBI:136879"/>
    </reaction>
</comment>
<comment type="subunit">
    <text evidence="1">Homotetramer.</text>
</comment>
<comment type="similarity">
    <text evidence="1">Belongs to the class I-like SAM-binding methyltransferase superfamily. CmoB family.</text>
</comment>
<sequence>MQENLLEKQFLNHPLYAKIQELKALNLACNFSLDDSVNLSTNSQAKDEILTITKKLKPWRKGPFKIDDLFIDTEWQSFIKFNILKPFMGEISQKCVADIGCNNGYYMFKMLEFNPAKLIGFDPSIKYRLQFELINALAKTPIKYELLGVEDLPNYGLKFDVIFCLGVIYHRSDPIKMLKDLKAGLNKNGVVFLDTMYIEDEREIALVPNKTYSKIPNIYFVPSISALKNWCERAGFKEFEVLATKKTDENEQRKTEWIDSFSLENFLDPKDKNLTIEGYEAPKRVYIRIKI</sequence>
<protein>
    <recommendedName>
        <fullName evidence="1">tRNA U34 carboxymethyltransferase</fullName>
        <ecNumber evidence="1">2.5.1.-</ecNumber>
    </recommendedName>
</protein>
<reference key="1">
    <citation type="submission" date="2007-07" db="EMBL/GenBank/DDBJ databases">
        <title>Complete genome sequence of Campylobacter jejuni subsp doylei 269.97 isolated from human blood.</title>
        <authorList>
            <person name="Fouts D.E."/>
            <person name="Mongodin E.F."/>
            <person name="Puiu D."/>
            <person name="Sebastian Y."/>
            <person name="Miller W.G."/>
            <person name="Mandrell R.E."/>
            <person name="Lastovica A.J."/>
            <person name="Nelson K.E."/>
        </authorList>
    </citation>
    <scope>NUCLEOTIDE SEQUENCE [LARGE SCALE GENOMIC DNA]</scope>
    <source>
        <strain>ATCC BAA-1458 / RM4099 / 269.97</strain>
    </source>
</reference>
<dbReference type="EC" id="2.5.1.-" evidence="1"/>
<dbReference type="EMBL" id="CP000768">
    <property type="protein sequence ID" value="ABS43916.1"/>
    <property type="molecule type" value="Genomic_DNA"/>
</dbReference>
<dbReference type="SMR" id="A7H361"/>
<dbReference type="KEGG" id="cjd:JJD26997_0814"/>
<dbReference type="HOGENOM" id="CLU_052665_1_0_7"/>
<dbReference type="Proteomes" id="UP000002302">
    <property type="component" value="Chromosome"/>
</dbReference>
<dbReference type="GO" id="GO:0016765">
    <property type="term" value="F:transferase activity, transferring alkyl or aryl (other than methyl) groups"/>
    <property type="evidence" value="ECO:0007669"/>
    <property type="project" value="InterPro"/>
</dbReference>
<dbReference type="GO" id="GO:0002098">
    <property type="term" value="P:tRNA wobble uridine modification"/>
    <property type="evidence" value="ECO:0007669"/>
    <property type="project" value="InterPro"/>
</dbReference>
<dbReference type="CDD" id="cd02440">
    <property type="entry name" value="AdoMet_MTases"/>
    <property type="match status" value="1"/>
</dbReference>
<dbReference type="Gene3D" id="3.40.50.150">
    <property type="entry name" value="Vaccinia Virus protein VP39"/>
    <property type="match status" value="1"/>
</dbReference>
<dbReference type="HAMAP" id="MF_01590">
    <property type="entry name" value="tRNA_carboxymethyltr_CmoB"/>
    <property type="match status" value="1"/>
</dbReference>
<dbReference type="InterPro" id="IPR010017">
    <property type="entry name" value="CmoB"/>
</dbReference>
<dbReference type="InterPro" id="IPR027555">
    <property type="entry name" value="Mo5U34_MeTrfas-like"/>
</dbReference>
<dbReference type="InterPro" id="IPR029063">
    <property type="entry name" value="SAM-dependent_MTases_sf"/>
</dbReference>
<dbReference type="NCBIfam" id="NF011650">
    <property type="entry name" value="PRK15068.1"/>
    <property type="match status" value="1"/>
</dbReference>
<dbReference type="NCBIfam" id="TIGR00452">
    <property type="entry name" value="tRNA 5-methoxyuridine(34)/uridine 5-oxyacetic acid(34) synthase CmoB"/>
    <property type="match status" value="1"/>
</dbReference>
<dbReference type="PANTHER" id="PTHR43861:SF1">
    <property type="entry name" value="TRANS-ACONITATE 2-METHYLTRANSFERASE"/>
    <property type="match status" value="1"/>
</dbReference>
<dbReference type="PANTHER" id="PTHR43861">
    <property type="entry name" value="TRANS-ACONITATE 2-METHYLTRANSFERASE-RELATED"/>
    <property type="match status" value="1"/>
</dbReference>
<dbReference type="Pfam" id="PF08003">
    <property type="entry name" value="Methyltransf_9"/>
    <property type="match status" value="1"/>
</dbReference>
<dbReference type="SUPFAM" id="SSF53335">
    <property type="entry name" value="S-adenosyl-L-methionine-dependent methyltransferases"/>
    <property type="match status" value="1"/>
</dbReference>
<accession>A7H361</accession>
<proteinExistence type="inferred from homology"/>
<feature type="chain" id="PRO_1000069326" description="tRNA U34 carboxymethyltransferase">
    <location>
        <begin position="1"/>
        <end position="291"/>
    </location>
</feature>
<feature type="binding site" evidence="1">
    <location>
        <position position="61"/>
    </location>
    <ligand>
        <name>carboxy-S-adenosyl-L-methionine</name>
        <dbReference type="ChEBI" id="CHEBI:134278"/>
    </ligand>
</feature>
<feature type="binding site" evidence="1">
    <location>
        <position position="75"/>
    </location>
    <ligand>
        <name>carboxy-S-adenosyl-L-methionine</name>
        <dbReference type="ChEBI" id="CHEBI:134278"/>
    </ligand>
</feature>
<feature type="binding site" evidence="1">
    <location>
        <position position="80"/>
    </location>
    <ligand>
        <name>carboxy-S-adenosyl-L-methionine</name>
        <dbReference type="ChEBI" id="CHEBI:134278"/>
    </ligand>
</feature>
<feature type="binding site" evidence="1">
    <location>
        <position position="100"/>
    </location>
    <ligand>
        <name>carboxy-S-adenosyl-L-methionine</name>
        <dbReference type="ChEBI" id="CHEBI:134278"/>
    </ligand>
</feature>
<feature type="binding site" evidence="1">
    <location>
        <begin position="122"/>
        <end position="124"/>
    </location>
    <ligand>
        <name>carboxy-S-adenosyl-L-methionine</name>
        <dbReference type="ChEBI" id="CHEBI:134278"/>
    </ligand>
</feature>
<feature type="binding site" evidence="1">
    <location>
        <begin position="149"/>
        <end position="150"/>
    </location>
    <ligand>
        <name>carboxy-S-adenosyl-L-methionine</name>
        <dbReference type="ChEBI" id="CHEBI:134278"/>
    </ligand>
</feature>
<feature type="binding site" evidence="1">
    <location>
        <position position="169"/>
    </location>
    <ligand>
        <name>carboxy-S-adenosyl-L-methionine</name>
        <dbReference type="ChEBI" id="CHEBI:134278"/>
    </ligand>
</feature>
<feature type="binding site" evidence="1">
    <location>
        <position position="284"/>
    </location>
    <ligand>
        <name>carboxy-S-adenosyl-L-methionine</name>
        <dbReference type="ChEBI" id="CHEBI:134278"/>
    </ligand>
</feature>
<keyword id="KW-0808">Transferase</keyword>
<keyword id="KW-0819">tRNA processing</keyword>
<name>CMOB_CAMJD</name>
<gene>
    <name evidence="1" type="primary">cmoB</name>
    <name type="ordered locus">JJD26997_0814</name>
</gene>